<organism>
    <name type="scientific">Escherichia coli O6:H1 (strain CFT073 / ATCC 700928 / UPEC)</name>
    <dbReference type="NCBI Taxonomy" id="199310"/>
    <lineage>
        <taxon>Bacteria</taxon>
        <taxon>Pseudomonadati</taxon>
        <taxon>Pseudomonadota</taxon>
        <taxon>Gammaproteobacteria</taxon>
        <taxon>Enterobacterales</taxon>
        <taxon>Enterobacteriaceae</taxon>
        <taxon>Escherichia</taxon>
    </lineage>
</organism>
<feature type="signal peptide" evidence="1">
    <location>
        <begin position="1"/>
        <end position="25"/>
    </location>
</feature>
<feature type="chain" id="PRO_0000013873" description="Nickel/cobalt homeostasis protein RcnB">
    <location>
        <begin position="26"/>
        <end position="112"/>
    </location>
</feature>
<comment type="function">
    <text evidence="1">Influences nickel and cobalt homeostasis. May act by modulating RcnA-mediated export of these ions to avoid excess efflux (By similarity).</text>
</comment>
<comment type="subcellular location">
    <subcellularLocation>
        <location evidence="1">Periplasm</location>
    </subcellularLocation>
</comment>
<comment type="similarity">
    <text evidence="2">Belongs to the RcnB family.</text>
</comment>
<comment type="sequence caution" evidence="2">
    <conflict type="erroneous initiation">
        <sequence resource="EMBL-CDS" id="AAN81090"/>
    </conflict>
    <text>Extended N-terminus.</text>
</comment>
<sequence>MTIKNKMLLGALLLVTSAAWAAPATAGSTNTSGISKYELSSFIADFKHFKPGDTVPEMYRTDEYNIKQWQLRNLPAPDAGTHWTYMGGAYVLISDTDGKIIKAYDGEIFYHR</sequence>
<reference key="1">
    <citation type="journal article" date="2002" name="Proc. Natl. Acad. Sci. U.S.A.">
        <title>Extensive mosaic structure revealed by the complete genome sequence of uropathogenic Escherichia coli.</title>
        <authorList>
            <person name="Welch R.A."/>
            <person name="Burland V."/>
            <person name="Plunkett G. III"/>
            <person name="Redford P."/>
            <person name="Roesch P."/>
            <person name="Rasko D."/>
            <person name="Buckles E.L."/>
            <person name="Liou S.-R."/>
            <person name="Boutin A."/>
            <person name="Hackett J."/>
            <person name="Stroud D."/>
            <person name="Mayhew G.F."/>
            <person name="Rose D.J."/>
            <person name="Zhou S."/>
            <person name="Schwartz D.C."/>
            <person name="Perna N.T."/>
            <person name="Mobley H.L.T."/>
            <person name="Donnenberg M.S."/>
            <person name="Blattner F.R."/>
        </authorList>
    </citation>
    <scope>NUCLEOTIDE SEQUENCE [LARGE SCALE GENOMIC DNA]</scope>
    <source>
        <strain>CFT073 / ATCC 700928 / UPEC</strain>
    </source>
</reference>
<accession>P64535</accession>
<accession>P76426</accession>
<keyword id="KW-0574">Periplasm</keyword>
<keyword id="KW-1185">Reference proteome</keyword>
<keyword id="KW-0732">Signal</keyword>
<evidence type="ECO:0000250" key="1"/>
<evidence type="ECO:0000305" key="2"/>
<protein>
    <recommendedName>
        <fullName>Nickel/cobalt homeostasis protein RcnB</fullName>
    </recommendedName>
</protein>
<proteinExistence type="inferred from homology"/>
<gene>
    <name type="primary">rcnB</name>
    <name type="ordered locus">c2634</name>
</gene>
<dbReference type="EMBL" id="AE014075">
    <property type="protein sequence ID" value="AAN81090.1"/>
    <property type="status" value="ALT_INIT"/>
    <property type="molecule type" value="Genomic_DNA"/>
</dbReference>
<dbReference type="RefSeq" id="WP_000153067.1">
    <property type="nucleotide sequence ID" value="NZ_CP051263.1"/>
</dbReference>
<dbReference type="SMR" id="P64535"/>
<dbReference type="STRING" id="199310.c2634"/>
<dbReference type="GeneID" id="75203264"/>
<dbReference type="KEGG" id="ecc:c2634"/>
<dbReference type="eggNOG" id="COG5455">
    <property type="taxonomic scope" value="Bacteria"/>
</dbReference>
<dbReference type="HOGENOM" id="CLU_1552956_0_0_6"/>
<dbReference type="Proteomes" id="UP000001410">
    <property type="component" value="Chromosome"/>
</dbReference>
<dbReference type="GO" id="GO:0042597">
    <property type="term" value="C:periplasmic space"/>
    <property type="evidence" value="ECO:0007669"/>
    <property type="project" value="UniProtKB-SubCell"/>
</dbReference>
<dbReference type="FunFam" id="3.10.450.160:FF:000001">
    <property type="entry name" value="Heavy metal resistance protein"/>
    <property type="match status" value="1"/>
</dbReference>
<dbReference type="Gene3D" id="3.10.450.160">
    <property type="entry name" value="inner membrane protein cigr"/>
    <property type="match status" value="1"/>
</dbReference>
<dbReference type="InterPro" id="IPR024572">
    <property type="entry name" value="RcnB"/>
</dbReference>
<dbReference type="Pfam" id="PF11776">
    <property type="entry name" value="RcnB"/>
    <property type="match status" value="1"/>
</dbReference>
<name>RCNB_ECOL6</name>